<name>PEPT_SALTY</name>
<comment type="function">
    <text evidence="3">Cleaves the N-terminal amino acid of tripeptides. Hydrolyzes tripeptides containing N-terminal methionine, leucine, or phenylalanine. Displays little or no activity against dipeptides, N-blocked or C-blocked tripeptides, and tetrapeptides.</text>
</comment>
<comment type="catalytic activity">
    <reaction>
        <text>Release of the N-terminal residue from a tripeptide.</text>
        <dbReference type="EC" id="3.4.11.4"/>
    </reaction>
</comment>
<comment type="cofactor">
    <cofactor evidence="2">
        <name>Zn(2+)</name>
        <dbReference type="ChEBI" id="CHEBI:29105"/>
    </cofactor>
    <text evidence="2">Binds 2 Zn(2+) ions per subunit.</text>
</comment>
<comment type="activity regulation">
    <text evidence="3">Inhibited by EDTA.</text>
</comment>
<comment type="subunit">
    <text evidence="2">Homodimer.</text>
</comment>
<comment type="subcellular location">
    <subcellularLocation>
        <location>Cytoplasm</location>
    </subcellularLocation>
</comment>
<comment type="similarity">
    <text evidence="4">Belongs to the peptidase M20B family.</text>
</comment>
<feature type="chain" id="PRO_0000185312" description="Peptidase T">
    <location>
        <begin position="1"/>
        <end position="409"/>
    </location>
</feature>
<feature type="region of interest" description="Catalytic N-terminal">
    <location>
        <begin position="1"/>
        <end position="207"/>
    </location>
</feature>
<feature type="region of interest" description="Dimerization">
    <location>
        <begin position="208"/>
        <end position="318"/>
    </location>
</feature>
<feature type="region of interest" description="Catalytic C-terminal">
    <location>
        <begin position="319"/>
        <end position="409"/>
    </location>
</feature>
<feature type="active site" evidence="1">
    <location>
        <position position="80"/>
    </location>
</feature>
<feature type="active site" description="Proton acceptor" evidence="1">
    <location>
        <position position="173"/>
    </location>
</feature>
<feature type="binding site" evidence="2">
    <location>
        <position position="78"/>
    </location>
    <ligand>
        <name>Zn(2+)</name>
        <dbReference type="ChEBI" id="CHEBI:29105"/>
        <label>1</label>
    </ligand>
</feature>
<feature type="binding site" evidence="2">
    <location>
        <position position="140"/>
    </location>
    <ligand>
        <name>Zn(2+)</name>
        <dbReference type="ChEBI" id="CHEBI:29105"/>
        <label>1</label>
    </ligand>
</feature>
<feature type="binding site" evidence="2">
    <location>
        <position position="140"/>
    </location>
    <ligand>
        <name>Zn(2+)</name>
        <dbReference type="ChEBI" id="CHEBI:29105"/>
        <label>2</label>
    </ligand>
</feature>
<feature type="binding site" evidence="2">
    <location>
        <position position="174"/>
    </location>
    <ligand>
        <name>Zn(2+)</name>
        <dbReference type="ChEBI" id="CHEBI:29105"/>
        <label>2</label>
    </ligand>
</feature>
<feature type="binding site" evidence="2">
    <location>
        <position position="196"/>
    </location>
    <ligand>
        <name>Zn(2+)</name>
        <dbReference type="ChEBI" id="CHEBI:29105"/>
        <label>1</label>
    </ligand>
</feature>
<feature type="binding site" evidence="2">
    <location>
        <position position="379"/>
    </location>
    <ligand>
        <name>Zn(2+)</name>
        <dbReference type="ChEBI" id="CHEBI:29105"/>
        <label>2</label>
    </ligand>
</feature>
<feature type="helix" evidence="5">
    <location>
        <begin position="4"/>
        <end position="12"/>
    </location>
</feature>
<feature type="strand" evidence="5">
    <location>
        <begin position="23"/>
        <end position="28"/>
    </location>
</feature>
<feature type="helix" evidence="5">
    <location>
        <begin position="29"/>
        <end position="45"/>
    </location>
</feature>
<feature type="strand" evidence="5">
    <location>
        <begin position="48"/>
        <end position="52"/>
    </location>
</feature>
<feature type="strand" evidence="5">
    <location>
        <begin position="58"/>
        <end position="62"/>
    </location>
</feature>
<feature type="strand" evidence="5">
    <location>
        <begin position="73"/>
        <end position="78"/>
    </location>
</feature>
<feature type="strand" evidence="5">
    <location>
        <begin position="93"/>
        <end position="95"/>
    </location>
</feature>
<feature type="strand" evidence="5">
    <location>
        <begin position="106"/>
        <end position="109"/>
    </location>
</feature>
<feature type="turn" evidence="5">
    <location>
        <begin position="114"/>
        <end position="116"/>
    </location>
</feature>
<feature type="helix" evidence="5">
    <location>
        <begin position="118"/>
        <end position="122"/>
    </location>
</feature>
<feature type="strand" evidence="5">
    <location>
        <begin position="128"/>
        <end position="130"/>
    </location>
</feature>
<feature type="strand" evidence="5">
    <location>
        <begin position="133"/>
        <end position="135"/>
    </location>
</feature>
<feature type="helix" evidence="5">
    <location>
        <begin position="139"/>
        <end position="156"/>
    </location>
</feature>
<feature type="strand" evidence="5">
    <location>
        <begin position="157"/>
        <end position="159"/>
    </location>
</feature>
<feature type="strand" evidence="5">
    <location>
        <begin position="165"/>
        <end position="171"/>
    </location>
</feature>
<feature type="helix" evidence="5">
    <location>
        <begin position="173"/>
        <end position="175"/>
    </location>
</feature>
<feature type="turn" evidence="5">
    <location>
        <begin position="178"/>
        <end position="181"/>
    </location>
</feature>
<feature type="helix" evidence="5">
    <location>
        <begin position="184"/>
        <end position="187"/>
    </location>
</feature>
<feature type="strand" evidence="5">
    <location>
        <begin position="190"/>
        <end position="194"/>
    </location>
</feature>
<feature type="strand" evidence="5">
    <location>
        <begin position="202"/>
        <end position="204"/>
    </location>
</feature>
<feature type="strand" evidence="5">
    <location>
        <begin position="209"/>
        <end position="218"/>
    </location>
</feature>
<feature type="helix" evidence="5">
    <location>
        <begin position="224"/>
        <end position="226"/>
    </location>
</feature>
<feature type="turn" evidence="5">
    <location>
        <begin position="228"/>
        <end position="230"/>
    </location>
</feature>
<feature type="helix" evidence="5">
    <location>
        <begin position="234"/>
        <end position="243"/>
    </location>
</feature>
<feature type="helix" evidence="5">
    <location>
        <begin position="251"/>
        <end position="253"/>
    </location>
</feature>
<feature type="strand" evidence="5">
    <location>
        <begin position="260"/>
        <end position="268"/>
    </location>
</feature>
<feature type="strand" evidence="5">
    <location>
        <begin position="270"/>
        <end position="283"/>
    </location>
</feature>
<feature type="helix" evidence="5">
    <location>
        <begin position="284"/>
        <end position="301"/>
    </location>
</feature>
<feature type="turn" evidence="5">
    <location>
        <begin position="302"/>
        <end position="304"/>
    </location>
</feature>
<feature type="strand" evidence="5">
    <location>
        <begin position="311"/>
        <end position="319"/>
    </location>
</feature>
<feature type="helix" evidence="5">
    <location>
        <begin position="323"/>
        <end position="327"/>
    </location>
</feature>
<feature type="helix" evidence="5">
    <location>
        <begin position="331"/>
        <end position="342"/>
    </location>
</feature>
<feature type="strand" evidence="5">
    <location>
        <begin position="352"/>
        <end position="354"/>
    </location>
</feature>
<feature type="helix" evidence="5">
    <location>
        <begin position="357"/>
        <end position="361"/>
    </location>
</feature>
<feature type="turn" evidence="5">
    <location>
        <begin position="362"/>
        <end position="365"/>
    </location>
</feature>
<feature type="strand" evidence="5">
    <location>
        <begin position="374"/>
        <end position="377"/>
    </location>
</feature>
<feature type="strand" evidence="5">
    <location>
        <begin position="384"/>
        <end position="386"/>
    </location>
</feature>
<feature type="helix" evidence="5">
    <location>
        <begin position="387"/>
        <end position="406"/>
    </location>
</feature>
<proteinExistence type="evidence at protein level"/>
<gene>
    <name type="primary">pepT</name>
    <name type="ordered locus">STM1227</name>
</gene>
<protein>
    <recommendedName>
        <fullName>Peptidase T</fullName>
        <ecNumber>3.4.11.4</ecNumber>
    </recommendedName>
    <alternativeName>
        <fullName>Aminotripeptidase</fullName>
        <shortName>Tripeptidase</shortName>
    </alternativeName>
    <alternativeName>
        <fullName>Tripeptide aminopeptidase</fullName>
    </alternativeName>
</protein>
<organism>
    <name type="scientific">Salmonella typhimurium (strain LT2 / SGSC1412 / ATCC 700720)</name>
    <dbReference type="NCBI Taxonomy" id="99287"/>
    <lineage>
        <taxon>Bacteria</taxon>
        <taxon>Pseudomonadati</taxon>
        <taxon>Pseudomonadota</taxon>
        <taxon>Gammaproteobacteria</taxon>
        <taxon>Enterobacterales</taxon>
        <taxon>Enterobacteriaceae</taxon>
        <taxon>Salmonella</taxon>
    </lineage>
</organism>
<dbReference type="EC" id="3.4.11.4"/>
<dbReference type="EMBL" id="M62725">
    <property type="protein sequence ID" value="AAA27183.1"/>
    <property type="molecule type" value="Genomic_DNA"/>
</dbReference>
<dbReference type="EMBL" id="AE006468">
    <property type="protein sequence ID" value="AAL20156.1"/>
    <property type="molecule type" value="Genomic_DNA"/>
</dbReference>
<dbReference type="PIR" id="A42363">
    <property type="entry name" value="A42363"/>
</dbReference>
<dbReference type="RefSeq" id="NP_460197.1">
    <property type="nucleotide sequence ID" value="NC_003197.2"/>
</dbReference>
<dbReference type="RefSeq" id="WP_000359410.1">
    <property type="nucleotide sequence ID" value="NC_003197.2"/>
</dbReference>
<dbReference type="PDB" id="1FNO">
    <property type="method" value="X-ray"/>
    <property type="resolution" value="2.40 A"/>
    <property type="chains" value="A=1-409"/>
</dbReference>
<dbReference type="PDBsum" id="1FNO"/>
<dbReference type="SMR" id="P26311"/>
<dbReference type="STRING" id="99287.STM1227"/>
<dbReference type="MEROPS" id="M20.003"/>
<dbReference type="PaxDb" id="99287-STM1227"/>
<dbReference type="GeneID" id="1252745"/>
<dbReference type="KEGG" id="stm:STM1227"/>
<dbReference type="PATRIC" id="fig|99287.12.peg.1298"/>
<dbReference type="HOGENOM" id="CLU_053676_0_0_6"/>
<dbReference type="OMA" id="GHNFHGK"/>
<dbReference type="PhylomeDB" id="P26311"/>
<dbReference type="BioCyc" id="SENT99287:STM1227-MONOMER"/>
<dbReference type="EvolutionaryTrace" id="P26311"/>
<dbReference type="Proteomes" id="UP000001014">
    <property type="component" value="Chromosome"/>
</dbReference>
<dbReference type="GO" id="GO:0005829">
    <property type="term" value="C:cytosol"/>
    <property type="evidence" value="ECO:0000318"/>
    <property type="project" value="GO_Central"/>
</dbReference>
<dbReference type="GO" id="GO:0008237">
    <property type="term" value="F:metallopeptidase activity"/>
    <property type="evidence" value="ECO:0007669"/>
    <property type="project" value="UniProtKB-KW"/>
</dbReference>
<dbReference type="GO" id="GO:0045148">
    <property type="term" value="F:tripeptide aminopeptidase activity"/>
    <property type="evidence" value="ECO:0000318"/>
    <property type="project" value="GO_Central"/>
</dbReference>
<dbReference type="GO" id="GO:0008270">
    <property type="term" value="F:zinc ion binding"/>
    <property type="evidence" value="ECO:0007669"/>
    <property type="project" value="UniProtKB-UniRule"/>
</dbReference>
<dbReference type="GO" id="GO:0043171">
    <property type="term" value="P:peptide catabolic process"/>
    <property type="evidence" value="ECO:0007669"/>
    <property type="project" value="UniProtKB-UniRule"/>
</dbReference>
<dbReference type="GO" id="GO:0006508">
    <property type="term" value="P:proteolysis"/>
    <property type="evidence" value="ECO:0007669"/>
    <property type="project" value="UniProtKB-UniRule"/>
</dbReference>
<dbReference type="CDD" id="cd03892">
    <property type="entry name" value="M20_peptT"/>
    <property type="match status" value="1"/>
</dbReference>
<dbReference type="FunFam" id="3.30.70.360:FF:000002">
    <property type="entry name" value="Peptidase T"/>
    <property type="match status" value="1"/>
</dbReference>
<dbReference type="Gene3D" id="3.30.70.360">
    <property type="match status" value="1"/>
</dbReference>
<dbReference type="Gene3D" id="3.40.630.10">
    <property type="entry name" value="Zn peptidases"/>
    <property type="match status" value="1"/>
</dbReference>
<dbReference type="HAMAP" id="MF_00550">
    <property type="entry name" value="Aminopeptidase_M20"/>
    <property type="match status" value="1"/>
</dbReference>
<dbReference type="InterPro" id="IPR001261">
    <property type="entry name" value="ArgE/DapE_CS"/>
</dbReference>
<dbReference type="InterPro" id="IPR036264">
    <property type="entry name" value="Bact_exopeptidase_dim_dom"/>
</dbReference>
<dbReference type="InterPro" id="IPR002933">
    <property type="entry name" value="Peptidase_M20"/>
</dbReference>
<dbReference type="InterPro" id="IPR011650">
    <property type="entry name" value="Peptidase_M20_dimer"/>
</dbReference>
<dbReference type="InterPro" id="IPR010161">
    <property type="entry name" value="Peptidase_M20B"/>
</dbReference>
<dbReference type="NCBIfam" id="TIGR01882">
    <property type="entry name" value="peptidase-T"/>
    <property type="match status" value="1"/>
</dbReference>
<dbReference type="NCBIfam" id="NF003976">
    <property type="entry name" value="PRK05469.1"/>
    <property type="match status" value="1"/>
</dbReference>
<dbReference type="NCBIfam" id="NF009920">
    <property type="entry name" value="PRK13381.1"/>
    <property type="match status" value="1"/>
</dbReference>
<dbReference type="PANTHER" id="PTHR42994">
    <property type="entry name" value="PEPTIDASE T"/>
    <property type="match status" value="1"/>
</dbReference>
<dbReference type="PANTHER" id="PTHR42994:SF1">
    <property type="entry name" value="PEPTIDASE T"/>
    <property type="match status" value="1"/>
</dbReference>
<dbReference type="Pfam" id="PF07687">
    <property type="entry name" value="M20_dimer"/>
    <property type="match status" value="1"/>
</dbReference>
<dbReference type="Pfam" id="PF01546">
    <property type="entry name" value="Peptidase_M20"/>
    <property type="match status" value="1"/>
</dbReference>
<dbReference type="PIRSF" id="PIRSF037215">
    <property type="entry name" value="Peptidase_M20B"/>
    <property type="match status" value="1"/>
</dbReference>
<dbReference type="SUPFAM" id="SSF55031">
    <property type="entry name" value="Bacterial exopeptidase dimerisation domain"/>
    <property type="match status" value="1"/>
</dbReference>
<dbReference type="SUPFAM" id="SSF53187">
    <property type="entry name" value="Zn-dependent exopeptidases"/>
    <property type="match status" value="1"/>
</dbReference>
<dbReference type="PROSITE" id="PS00758">
    <property type="entry name" value="ARGE_DAPE_CPG2_1"/>
    <property type="match status" value="1"/>
</dbReference>
<dbReference type="PROSITE" id="PS00759">
    <property type="entry name" value="ARGE_DAPE_CPG2_2"/>
    <property type="match status" value="1"/>
</dbReference>
<keyword id="KW-0002">3D-structure</keyword>
<keyword id="KW-0031">Aminopeptidase</keyword>
<keyword id="KW-0963">Cytoplasm</keyword>
<keyword id="KW-0903">Direct protein sequencing</keyword>
<keyword id="KW-0378">Hydrolase</keyword>
<keyword id="KW-0479">Metal-binding</keyword>
<keyword id="KW-0482">Metalloprotease</keyword>
<keyword id="KW-0645">Protease</keyword>
<keyword id="KW-1185">Reference proteome</keyword>
<keyword id="KW-0862">Zinc</keyword>
<accession>P26311</accession>
<reference key="1">
    <citation type="journal article" date="1991" name="J. Bacteriol.">
        <title>Cloning and nucleotide sequence of the anaerobically regulated pepT gene of Salmonella typhimurium.</title>
        <authorList>
            <person name="Miller C.G."/>
            <person name="Miller J.L."/>
            <person name="Bagga D.A."/>
        </authorList>
    </citation>
    <scope>NUCLEOTIDE SEQUENCE [GENOMIC DNA]</scope>
    <scope>PROTEIN SEQUENCE OF 1-22</scope>
</reference>
<reference key="2">
    <citation type="journal article" date="2001" name="Nature">
        <title>Complete genome sequence of Salmonella enterica serovar Typhimurium LT2.</title>
        <authorList>
            <person name="McClelland M."/>
            <person name="Sanderson K.E."/>
            <person name="Spieth J."/>
            <person name="Clifton S.W."/>
            <person name="Latreille P."/>
            <person name="Courtney L."/>
            <person name="Porwollik S."/>
            <person name="Ali J."/>
            <person name="Dante M."/>
            <person name="Du F."/>
            <person name="Hou S."/>
            <person name="Layman D."/>
            <person name="Leonard S."/>
            <person name="Nguyen C."/>
            <person name="Scott K."/>
            <person name="Holmes A."/>
            <person name="Grewal N."/>
            <person name="Mulvaney E."/>
            <person name="Ryan E."/>
            <person name="Sun H."/>
            <person name="Florea L."/>
            <person name="Miller W."/>
            <person name="Stoneking T."/>
            <person name="Nhan M."/>
            <person name="Waterston R."/>
            <person name="Wilson R.K."/>
        </authorList>
    </citation>
    <scope>NUCLEOTIDE SEQUENCE [LARGE SCALE GENOMIC DNA]</scope>
    <source>
        <strain>LT2 / SGSC1412 / ATCC 700720</strain>
    </source>
</reference>
<reference key="3">
    <citation type="journal article" date="1983" name="J. Bacteriol.">
        <title>Isolation and characterization Salmonella typhimurium mutants lacking a tripeptidase (peptidase T).</title>
        <authorList>
            <person name="Strauch K.L."/>
            <person name="Miller C.G."/>
        </authorList>
    </citation>
    <scope>FUNCTION</scope>
    <scope>CHARACTERIZATION</scope>
    <scope>SUBSTRATE SPECIFICITY</scope>
    <scope>ACTIVITY REGULATION</scope>
</reference>
<reference key="4">
    <citation type="journal article" date="2000" name="Acta Crystallogr. D">
        <title>Crystallization of peptidase T from Salmonella typhimurium.</title>
        <authorList>
            <person name="Hakansson K."/>
            <person name="Broder D."/>
            <person name="Wang A.H."/>
            <person name="Miller C.G."/>
        </authorList>
    </citation>
    <scope>CRYSTALLIZATION</scope>
</reference>
<reference key="5">
    <citation type="journal article" date="2002" name="Eur. J. Biochem.">
        <title>Structure of peptidase T from Salmonella typhimurium.</title>
        <authorList>
            <person name="Hakansson K."/>
            <person name="Miller C.G."/>
        </authorList>
    </citation>
    <scope>X-RAY CRYSTALLOGRAPHY (2.4 ANGSTROMS) IN COMPLEX WITH ZINC</scope>
    <scope>COFACTOR</scope>
    <scope>SUBUNIT</scope>
</reference>
<sequence>MDKLLERFLHYVSLDTQSKSGVRQVPSTEGQWKLLRLLKQQLEEMGLVNITLSEKGTLMATLPANVEGDIPAIGFISHVDTSPDFSGKNVNPQIVENYRGGDIALGIGDEVLSPVMFPVLHQLLGQTLITTDGKTLLGADDKAGVAEIMTALAVLKGNPIPHGDIKVAFTPDEEVGKGAKHFDVEAFGAQWAYTVDGGGVGELEFENFNAASVNIKIVGNNVHPGTAKGVMVNALSLAARIHAEVPADEAPETTEGYEGFYHLASMKGTVDRAEMHYIIRDFDRKQFEARKRKMMEIAKKVGKGLHPDCYIELVIEDSYYNMREKVVEHPHILDIAQQAMRDCHITPEMKPIRGGTDGAQLSFMGLPCPNLFTGGYNYHGKHEFVTLEGMEKAVQVIVRIAELTAKRGQ</sequence>
<evidence type="ECO:0000250" key="1"/>
<evidence type="ECO:0000269" key="2">
    <source>
    </source>
</evidence>
<evidence type="ECO:0000269" key="3">
    <source>
    </source>
</evidence>
<evidence type="ECO:0000305" key="4"/>
<evidence type="ECO:0007829" key="5">
    <source>
        <dbReference type="PDB" id="1FNO"/>
    </source>
</evidence>